<reference key="1">
    <citation type="submission" date="2006-08" db="EMBL/GenBank/DDBJ databases">
        <title>Positive selection in transcription factor genes on the human lineage.</title>
        <authorList>
            <person name="Nickel G.C."/>
            <person name="Tefft D.L."/>
            <person name="Trevarthen K."/>
            <person name="Funt J."/>
            <person name="Adams M.D."/>
        </authorList>
    </citation>
    <scope>NUCLEOTIDE SEQUENCE [GENOMIC DNA]</scope>
</reference>
<dbReference type="EMBL" id="DQ977535">
    <property type="protein sequence ID" value="ABM89360.1"/>
    <property type="molecule type" value="Genomic_DNA"/>
</dbReference>
<dbReference type="SMR" id="A2T7T2"/>
<dbReference type="GO" id="GO:0005737">
    <property type="term" value="C:cytoplasm"/>
    <property type="evidence" value="ECO:0000250"/>
    <property type="project" value="UniProtKB"/>
</dbReference>
<dbReference type="GO" id="GO:0005634">
    <property type="term" value="C:nucleus"/>
    <property type="evidence" value="ECO:0000250"/>
    <property type="project" value="UniProtKB"/>
</dbReference>
<dbReference type="GO" id="GO:0003700">
    <property type="term" value="F:DNA-binding transcription factor activity"/>
    <property type="evidence" value="ECO:0000250"/>
    <property type="project" value="UniProtKB"/>
</dbReference>
<dbReference type="GO" id="GO:0000981">
    <property type="term" value="F:DNA-binding transcription factor activity, RNA polymerase II-specific"/>
    <property type="evidence" value="ECO:0007669"/>
    <property type="project" value="InterPro"/>
</dbReference>
<dbReference type="GO" id="GO:0000978">
    <property type="term" value="F:RNA polymerase II cis-regulatory region sequence-specific DNA binding"/>
    <property type="evidence" value="ECO:0007669"/>
    <property type="project" value="TreeGrafter"/>
</dbReference>
<dbReference type="GO" id="GO:0043565">
    <property type="term" value="F:sequence-specific DNA binding"/>
    <property type="evidence" value="ECO:0000250"/>
    <property type="project" value="UniProtKB"/>
</dbReference>
<dbReference type="GO" id="GO:0060218">
    <property type="term" value="P:hematopoietic stem cell differentiation"/>
    <property type="evidence" value="ECO:0000250"/>
    <property type="project" value="UniProtKB"/>
</dbReference>
<dbReference type="GO" id="GO:0045944">
    <property type="term" value="P:positive regulation of transcription by RNA polymerase II"/>
    <property type="evidence" value="ECO:0007669"/>
    <property type="project" value="InterPro"/>
</dbReference>
<dbReference type="GO" id="GO:0061056">
    <property type="term" value="P:sclerotome development"/>
    <property type="evidence" value="ECO:0000250"/>
    <property type="project" value="UniProtKB"/>
</dbReference>
<dbReference type="GO" id="GO:0061053">
    <property type="term" value="P:somite development"/>
    <property type="evidence" value="ECO:0000250"/>
    <property type="project" value="UniProtKB"/>
</dbReference>
<dbReference type="CDD" id="cd00086">
    <property type="entry name" value="homeodomain"/>
    <property type="match status" value="1"/>
</dbReference>
<dbReference type="FunFam" id="1.10.10.60:FF:000109">
    <property type="entry name" value="Homeobox protein MOX-2"/>
    <property type="match status" value="1"/>
</dbReference>
<dbReference type="Gene3D" id="1.10.10.60">
    <property type="entry name" value="Homeodomain-like"/>
    <property type="match status" value="1"/>
</dbReference>
<dbReference type="InterPro" id="IPR001356">
    <property type="entry name" value="HD"/>
</dbReference>
<dbReference type="InterPro" id="IPR020479">
    <property type="entry name" value="HD_metazoa"/>
</dbReference>
<dbReference type="InterPro" id="IPR017970">
    <property type="entry name" value="Homeobox_CS"/>
</dbReference>
<dbReference type="InterPro" id="IPR009057">
    <property type="entry name" value="Homeodomain-like_sf"/>
</dbReference>
<dbReference type="InterPro" id="IPR042634">
    <property type="entry name" value="MOX-1/MOX-2"/>
</dbReference>
<dbReference type="PANTHER" id="PTHR24328">
    <property type="entry name" value="HOMEOBOX PROTEIN MOX"/>
    <property type="match status" value="1"/>
</dbReference>
<dbReference type="PANTHER" id="PTHR24328:SF8">
    <property type="entry name" value="HOMEOBOX PROTEIN MOX-1"/>
    <property type="match status" value="1"/>
</dbReference>
<dbReference type="Pfam" id="PF00046">
    <property type="entry name" value="Homeodomain"/>
    <property type="match status" value="1"/>
</dbReference>
<dbReference type="PRINTS" id="PR00024">
    <property type="entry name" value="HOMEOBOX"/>
</dbReference>
<dbReference type="SMART" id="SM00389">
    <property type="entry name" value="HOX"/>
    <property type="match status" value="1"/>
</dbReference>
<dbReference type="SUPFAM" id="SSF46689">
    <property type="entry name" value="Homeodomain-like"/>
    <property type="match status" value="1"/>
</dbReference>
<dbReference type="PROSITE" id="PS00027">
    <property type="entry name" value="HOMEOBOX_1"/>
    <property type="match status" value="1"/>
</dbReference>
<dbReference type="PROSITE" id="PS50071">
    <property type="entry name" value="HOMEOBOX_2"/>
    <property type="match status" value="1"/>
</dbReference>
<accession>A2T7T2</accession>
<proteinExistence type="inferred from homology"/>
<protein>
    <recommendedName>
        <fullName>Homeobox protein MOX-1</fullName>
    </recommendedName>
    <alternativeName>
        <fullName>Mesenchyme homeobox 1</fullName>
    </alternativeName>
</protein>
<comment type="function">
    <text evidence="1 2">Mesodermal transcription factor that plays a key role in somitogenesis and is specifically required for sclerotome development. Required for maintenance of the sclerotome polarity and formation of the cranio-cervical joints. Binds specifically to the promoter of target genes and regulates their expression. Activates expression of NKX3-2 in the sclerotome. Activates expression of CDKN1A and CDKN2A in endothelial cells, acting as a regulator of vascular cell proliferation. While it activates CDKN1A in a DNA-dependent manner, it activates CDKN2A in a DNA-independent manner. Required for hematopoietic stem cell (HSCs) induction via its role in somitogenesis: specification of HSCs occurs via the deployment of a specific endothelial precursor population, which arises within a sub-compartment of the somite named endotome.</text>
</comment>
<comment type="subcellular location">
    <subcellularLocation>
        <location evidence="2">Nucleus</location>
    </subcellularLocation>
    <subcellularLocation>
        <location evidence="2">Cytoplasm</location>
    </subcellularLocation>
    <text evidence="2">Localizes predominantly in the nucleus.</text>
</comment>
<sequence>MDPAASSCMRSLQPPAPVWGCLRNPHSEGNGASGLPHYPPTPFSFHQKADFPATATAAYPDFSASCLAATPHSLPQEERIFTEQHPAFPQSPNWHFPVSEARRRPNSGPAGGSKETRTSSLGLVDTTGGPGEDCGVLGSTANETEKKSSRRRKESSDNQENRGKPEGSSKARKERTAFTKEQLRELEAEFAHHNYLTRLRRYEIAVNLDLSERQVKVWFQNRRMKWKRVKGGQPISPNGQDPEDGDSAASPSSE</sequence>
<evidence type="ECO:0000250" key="1">
    <source>
        <dbReference type="UniProtKB" id="F1Q4R9"/>
    </source>
</evidence>
<evidence type="ECO:0000250" key="2">
    <source>
        <dbReference type="UniProtKB" id="P32442"/>
    </source>
</evidence>
<evidence type="ECO:0000255" key="3">
    <source>
        <dbReference type="PROSITE-ProRule" id="PRU00108"/>
    </source>
</evidence>
<evidence type="ECO:0000256" key="4">
    <source>
        <dbReference type="SAM" id="MobiDB-lite"/>
    </source>
</evidence>
<organism>
    <name type="scientific">Pongo pygmaeus</name>
    <name type="common">Bornean orangutan</name>
    <dbReference type="NCBI Taxonomy" id="9600"/>
    <lineage>
        <taxon>Eukaryota</taxon>
        <taxon>Metazoa</taxon>
        <taxon>Chordata</taxon>
        <taxon>Craniata</taxon>
        <taxon>Vertebrata</taxon>
        <taxon>Euteleostomi</taxon>
        <taxon>Mammalia</taxon>
        <taxon>Eutheria</taxon>
        <taxon>Euarchontoglires</taxon>
        <taxon>Primates</taxon>
        <taxon>Haplorrhini</taxon>
        <taxon>Catarrhini</taxon>
        <taxon>Hominidae</taxon>
        <taxon>Pongo</taxon>
    </lineage>
</organism>
<keyword id="KW-0010">Activator</keyword>
<keyword id="KW-0963">Cytoplasm</keyword>
<keyword id="KW-0217">Developmental protein</keyword>
<keyword id="KW-0238">DNA-binding</keyword>
<keyword id="KW-0371">Homeobox</keyword>
<keyword id="KW-0539">Nucleus</keyword>
<keyword id="KW-0678">Repressor</keyword>
<keyword id="KW-0804">Transcription</keyword>
<keyword id="KW-0805">Transcription regulation</keyword>
<feature type="chain" id="PRO_0000285457" description="Homeobox protein MOX-1">
    <location>
        <begin position="1"/>
        <end position="254"/>
    </location>
</feature>
<feature type="DNA-binding region" description="Homeobox" evidence="3">
    <location>
        <begin position="171"/>
        <end position="230"/>
    </location>
</feature>
<feature type="region of interest" description="Disordered" evidence="4">
    <location>
        <begin position="87"/>
        <end position="178"/>
    </location>
</feature>
<feature type="region of interest" description="Disordered" evidence="4">
    <location>
        <begin position="227"/>
        <end position="254"/>
    </location>
</feature>
<feature type="compositionally biased region" description="Basic and acidic residues" evidence="4">
    <location>
        <begin position="154"/>
        <end position="178"/>
    </location>
</feature>
<name>MEOX1_PONPY</name>
<gene>
    <name type="primary">MEOX1</name>
</gene>